<proteinExistence type="inferred from homology"/>
<accession>Q74FG1</accession>
<dbReference type="EMBL" id="AE017180">
    <property type="protein sequence ID" value="AAR33978.1"/>
    <property type="molecule type" value="Genomic_DNA"/>
</dbReference>
<dbReference type="RefSeq" id="NP_951705.1">
    <property type="nucleotide sequence ID" value="NC_002939.5"/>
</dbReference>
<dbReference type="RefSeq" id="WP_010941309.1">
    <property type="nucleotide sequence ID" value="NC_002939.5"/>
</dbReference>
<dbReference type="SMR" id="Q74FG1"/>
<dbReference type="FunCoup" id="Q74FG1">
    <property type="interactions" value="696"/>
</dbReference>
<dbReference type="STRING" id="243231.GSU0648"/>
<dbReference type="EnsemblBacteria" id="AAR33978">
    <property type="protein sequence ID" value="AAR33978"/>
    <property type="gene ID" value="GSU0648"/>
</dbReference>
<dbReference type="KEGG" id="gsu:GSU0648"/>
<dbReference type="PATRIC" id="fig|243231.5.peg.644"/>
<dbReference type="eggNOG" id="COG0335">
    <property type="taxonomic scope" value="Bacteria"/>
</dbReference>
<dbReference type="HOGENOM" id="CLU_103507_2_1_7"/>
<dbReference type="InParanoid" id="Q74FG1"/>
<dbReference type="OrthoDB" id="9803541at2"/>
<dbReference type="Proteomes" id="UP000000577">
    <property type="component" value="Chromosome"/>
</dbReference>
<dbReference type="GO" id="GO:0022625">
    <property type="term" value="C:cytosolic large ribosomal subunit"/>
    <property type="evidence" value="ECO:0000318"/>
    <property type="project" value="GO_Central"/>
</dbReference>
<dbReference type="GO" id="GO:0003735">
    <property type="term" value="F:structural constituent of ribosome"/>
    <property type="evidence" value="ECO:0000318"/>
    <property type="project" value="GO_Central"/>
</dbReference>
<dbReference type="GO" id="GO:0006412">
    <property type="term" value="P:translation"/>
    <property type="evidence" value="ECO:0007669"/>
    <property type="project" value="UniProtKB-UniRule"/>
</dbReference>
<dbReference type="FunFam" id="2.30.30.790:FF:000001">
    <property type="entry name" value="50S ribosomal protein L19"/>
    <property type="match status" value="1"/>
</dbReference>
<dbReference type="Gene3D" id="2.30.30.790">
    <property type="match status" value="1"/>
</dbReference>
<dbReference type="HAMAP" id="MF_00402">
    <property type="entry name" value="Ribosomal_bL19"/>
    <property type="match status" value="1"/>
</dbReference>
<dbReference type="InterPro" id="IPR001857">
    <property type="entry name" value="Ribosomal_bL19"/>
</dbReference>
<dbReference type="InterPro" id="IPR018257">
    <property type="entry name" value="Ribosomal_bL19_CS"/>
</dbReference>
<dbReference type="InterPro" id="IPR038657">
    <property type="entry name" value="Ribosomal_bL19_sf"/>
</dbReference>
<dbReference type="InterPro" id="IPR008991">
    <property type="entry name" value="Translation_prot_SH3-like_sf"/>
</dbReference>
<dbReference type="NCBIfam" id="TIGR01024">
    <property type="entry name" value="rplS_bact"/>
    <property type="match status" value="1"/>
</dbReference>
<dbReference type="PANTHER" id="PTHR15680:SF9">
    <property type="entry name" value="LARGE RIBOSOMAL SUBUNIT PROTEIN BL19M"/>
    <property type="match status" value="1"/>
</dbReference>
<dbReference type="PANTHER" id="PTHR15680">
    <property type="entry name" value="RIBOSOMAL PROTEIN L19"/>
    <property type="match status" value="1"/>
</dbReference>
<dbReference type="Pfam" id="PF01245">
    <property type="entry name" value="Ribosomal_L19"/>
    <property type="match status" value="1"/>
</dbReference>
<dbReference type="PIRSF" id="PIRSF002191">
    <property type="entry name" value="Ribosomal_L19"/>
    <property type="match status" value="1"/>
</dbReference>
<dbReference type="PRINTS" id="PR00061">
    <property type="entry name" value="RIBOSOMALL19"/>
</dbReference>
<dbReference type="SUPFAM" id="SSF50104">
    <property type="entry name" value="Translation proteins SH3-like domain"/>
    <property type="match status" value="1"/>
</dbReference>
<dbReference type="PROSITE" id="PS01015">
    <property type="entry name" value="RIBOSOMAL_L19"/>
    <property type="match status" value="1"/>
</dbReference>
<name>RL19_GEOSL</name>
<feature type="chain" id="PRO_0000163459" description="Large ribosomal subunit protein bL19">
    <location>
        <begin position="1"/>
        <end position="118"/>
    </location>
</feature>
<protein>
    <recommendedName>
        <fullName evidence="1">Large ribosomal subunit protein bL19</fullName>
    </recommendedName>
    <alternativeName>
        <fullName evidence="2">50S ribosomal protein L19</fullName>
    </alternativeName>
</protein>
<sequence length="118" mass="13467">MNKIDAIELEQMKKNIPPFKPGDTLKVHVKIVEGDKSRIQAFQGVCISRQNGGIRESFTVRKISNNIGVERVFPLHSPTVDAIEVITRGHVRRAKLYYLRKLRGKAARIREKKYVAAQ</sequence>
<comment type="function">
    <text evidence="1">This protein is located at the 30S-50S ribosomal subunit interface and may play a role in the structure and function of the aminoacyl-tRNA binding site.</text>
</comment>
<comment type="similarity">
    <text evidence="1">Belongs to the bacterial ribosomal protein bL19 family.</text>
</comment>
<evidence type="ECO:0000255" key="1">
    <source>
        <dbReference type="HAMAP-Rule" id="MF_00402"/>
    </source>
</evidence>
<evidence type="ECO:0000305" key="2"/>
<gene>
    <name evidence="1" type="primary">rplS</name>
    <name type="ordered locus">GSU0648</name>
</gene>
<organism>
    <name type="scientific">Geobacter sulfurreducens (strain ATCC 51573 / DSM 12127 / PCA)</name>
    <dbReference type="NCBI Taxonomy" id="243231"/>
    <lineage>
        <taxon>Bacteria</taxon>
        <taxon>Pseudomonadati</taxon>
        <taxon>Thermodesulfobacteriota</taxon>
        <taxon>Desulfuromonadia</taxon>
        <taxon>Geobacterales</taxon>
        <taxon>Geobacteraceae</taxon>
        <taxon>Geobacter</taxon>
    </lineage>
</organism>
<reference key="1">
    <citation type="journal article" date="2003" name="Science">
        <title>Genome of Geobacter sulfurreducens: metal reduction in subsurface environments.</title>
        <authorList>
            <person name="Methe B.A."/>
            <person name="Nelson K.E."/>
            <person name="Eisen J.A."/>
            <person name="Paulsen I.T."/>
            <person name="Nelson W.C."/>
            <person name="Heidelberg J.F."/>
            <person name="Wu D."/>
            <person name="Wu M."/>
            <person name="Ward N.L."/>
            <person name="Beanan M.J."/>
            <person name="Dodson R.J."/>
            <person name="Madupu R."/>
            <person name="Brinkac L.M."/>
            <person name="Daugherty S.C."/>
            <person name="DeBoy R.T."/>
            <person name="Durkin A.S."/>
            <person name="Gwinn M.L."/>
            <person name="Kolonay J.F."/>
            <person name="Sullivan S.A."/>
            <person name="Haft D.H."/>
            <person name="Selengut J."/>
            <person name="Davidsen T.M."/>
            <person name="Zafar N."/>
            <person name="White O."/>
            <person name="Tran B."/>
            <person name="Romero C."/>
            <person name="Forberger H.A."/>
            <person name="Weidman J.F."/>
            <person name="Khouri H.M."/>
            <person name="Feldblyum T.V."/>
            <person name="Utterback T.R."/>
            <person name="Van Aken S.E."/>
            <person name="Lovley D.R."/>
            <person name="Fraser C.M."/>
        </authorList>
    </citation>
    <scope>NUCLEOTIDE SEQUENCE [LARGE SCALE GENOMIC DNA]</scope>
    <source>
        <strain>ATCC 51573 / DSM 12127 / PCA</strain>
    </source>
</reference>
<keyword id="KW-1185">Reference proteome</keyword>
<keyword id="KW-0687">Ribonucleoprotein</keyword>
<keyword id="KW-0689">Ribosomal protein</keyword>